<organism>
    <name type="scientific">Halalkalibacterium halodurans (strain ATCC BAA-125 / DSM 18197 / FERM 7344 / JCM 9153 / C-125)</name>
    <name type="common">Bacillus halodurans</name>
    <dbReference type="NCBI Taxonomy" id="272558"/>
    <lineage>
        <taxon>Bacteria</taxon>
        <taxon>Bacillati</taxon>
        <taxon>Bacillota</taxon>
        <taxon>Bacilli</taxon>
        <taxon>Bacillales</taxon>
        <taxon>Bacillaceae</taxon>
        <taxon>Halalkalibacterium (ex Joshi et al. 2022)</taxon>
    </lineage>
</organism>
<proteinExistence type="inferred from homology"/>
<comment type="function">
    <text evidence="1">Required for the formation of a threonylcarbamoyl group on adenosine at position 37 (t(6)A37) in tRNAs that read codons beginning with adenine. Is involved in the transfer of the threonylcarbamoyl moiety of threonylcarbamoyl-AMP (TC-AMP) to the N6 group of A37, together with TsaE and TsaB. TsaD likely plays a direct catalytic role in this reaction.</text>
</comment>
<comment type="catalytic activity">
    <reaction evidence="1">
        <text>L-threonylcarbamoyladenylate + adenosine(37) in tRNA = N(6)-L-threonylcarbamoyladenosine(37) in tRNA + AMP + H(+)</text>
        <dbReference type="Rhea" id="RHEA:37059"/>
        <dbReference type="Rhea" id="RHEA-COMP:10162"/>
        <dbReference type="Rhea" id="RHEA-COMP:10163"/>
        <dbReference type="ChEBI" id="CHEBI:15378"/>
        <dbReference type="ChEBI" id="CHEBI:73682"/>
        <dbReference type="ChEBI" id="CHEBI:74411"/>
        <dbReference type="ChEBI" id="CHEBI:74418"/>
        <dbReference type="ChEBI" id="CHEBI:456215"/>
        <dbReference type="EC" id="2.3.1.234"/>
    </reaction>
</comment>
<comment type="cofactor">
    <cofactor evidence="1">
        <name>Fe(2+)</name>
        <dbReference type="ChEBI" id="CHEBI:29033"/>
    </cofactor>
    <text evidence="1">Binds 1 Fe(2+) ion per subunit.</text>
</comment>
<comment type="subcellular location">
    <subcellularLocation>
        <location evidence="1">Cytoplasm</location>
    </subcellularLocation>
</comment>
<comment type="similarity">
    <text evidence="1">Belongs to the KAE1 / TsaD family.</text>
</comment>
<sequence>MGDVVMNERELILAIETSCDETSAAVIENGTTILSNVVSSQIDSHKRFGGVVPEIASRHHVEQITVIVEEAMHEAGVDFADLAAVAVTEGPGLVGALLIGVNAAKAIAFAHQLPLIGVHHIAGHIYANRLLKELEFPLLALVVSGGHTELIYMENHGEFEVIGETRDDAVGEAYDKVARTLGLPYPGGPHIDRLAVNGEDTLQFPRAWLEPDSFDFSFSGLKSAVINTLHNAKQRGENVQAEDVAASFQASVIDVLVTKTKKAAEEYKVRQVLLAGGVAANKGLRTALEEAFFKEPIDLVIPPLSLCTDNAAMIGAAASIKFKQQTFAGMDLNGQPSLELEND</sequence>
<accession>Q9KFD3</accession>
<dbReference type="EC" id="2.3.1.234" evidence="1"/>
<dbReference type="EMBL" id="BA000004">
    <property type="protein sequence ID" value="BAB04267.1"/>
    <property type="molecule type" value="Genomic_DNA"/>
</dbReference>
<dbReference type="PIR" id="D83718">
    <property type="entry name" value="D83718"/>
</dbReference>
<dbReference type="SMR" id="Q9KFD3"/>
<dbReference type="STRING" id="272558.gene:10726417"/>
<dbReference type="KEGG" id="bha:BH0548"/>
<dbReference type="eggNOG" id="COG0533">
    <property type="taxonomic scope" value="Bacteria"/>
</dbReference>
<dbReference type="HOGENOM" id="CLU_023208_0_2_9"/>
<dbReference type="Proteomes" id="UP000001258">
    <property type="component" value="Chromosome"/>
</dbReference>
<dbReference type="GO" id="GO:0005737">
    <property type="term" value="C:cytoplasm"/>
    <property type="evidence" value="ECO:0007669"/>
    <property type="project" value="UniProtKB-SubCell"/>
</dbReference>
<dbReference type="GO" id="GO:0005506">
    <property type="term" value="F:iron ion binding"/>
    <property type="evidence" value="ECO:0007669"/>
    <property type="project" value="UniProtKB-UniRule"/>
</dbReference>
<dbReference type="GO" id="GO:0061711">
    <property type="term" value="F:N(6)-L-threonylcarbamoyladenine synthase activity"/>
    <property type="evidence" value="ECO:0007669"/>
    <property type="project" value="UniProtKB-EC"/>
</dbReference>
<dbReference type="GO" id="GO:0002949">
    <property type="term" value="P:tRNA threonylcarbamoyladenosine modification"/>
    <property type="evidence" value="ECO:0007669"/>
    <property type="project" value="UniProtKB-UniRule"/>
</dbReference>
<dbReference type="CDD" id="cd24133">
    <property type="entry name" value="ASKHA_NBD_TsaD_bac"/>
    <property type="match status" value="1"/>
</dbReference>
<dbReference type="FunFam" id="3.30.420.40:FF:000012">
    <property type="entry name" value="tRNA N6-adenosine threonylcarbamoyltransferase"/>
    <property type="match status" value="1"/>
</dbReference>
<dbReference type="FunFam" id="3.30.420.40:FF:000040">
    <property type="entry name" value="tRNA N6-adenosine threonylcarbamoyltransferase"/>
    <property type="match status" value="1"/>
</dbReference>
<dbReference type="Gene3D" id="3.30.420.40">
    <property type="match status" value="2"/>
</dbReference>
<dbReference type="HAMAP" id="MF_01445">
    <property type="entry name" value="TsaD"/>
    <property type="match status" value="1"/>
</dbReference>
<dbReference type="InterPro" id="IPR043129">
    <property type="entry name" value="ATPase_NBD"/>
</dbReference>
<dbReference type="InterPro" id="IPR000905">
    <property type="entry name" value="Gcp-like_dom"/>
</dbReference>
<dbReference type="InterPro" id="IPR017861">
    <property type="entry name" value="KAE1/TsaD"/>
</dbReference>
<dbReference type="InterPro" id="IPR017860">
    <property type="entry name" value="Peptidase_M22_CS"/>
</dbReference>
<dbReference type="InterPro" id="IPR022450">
    <property type="entry name" value="TsaD"/>
</dbReference>
<dbReference type="NCBIfam" id="TIGR00329">
    <property type="entry name" value="gcp_kae1"/>
    <property type="match status" value="1"/>
</dbReference>
<dbReference type="NCBIfam" id="TIGR03723">
    <property type="entry name" value="T6A_TsaD_YgjD"/>
    <property type="match status" value="1"/>
</dbReference>
<dbReference type="PANTHER" id="PTHR11735">
    <property type="entry name" value="TRNA N6-ADENOSINE THREONYLCARBAMOYLTRANSFERASE"/>
    <property type="match status" value="1"/>
</dbReference>
<dbReference type="PANTHER" id="PTHR11735:SF6">
    <property type="entry name" value="TRNA N6-ADENOSINE THREONYLCARBAMOYLTRANSFERASE, MITOCHONDRIAL"/>
    <property type="match status" value="1"/>
</dbReference>
<dbReference type="Pfam" id="PF00814">
    <property type="entry name" value="TsaD"/>
    <property type="match status" value="1"/>
</dbReference>
<dbReference type="PRINTS" id="PR00789">
    <property type="entry name" value="OSIALOPTASE"/>
</dbReference>
<dbReference type="SUPFAM" id="SSF53067">
    <property type="entry name" value="Actin-like ATPase domain"/>
    <property type="match status" value="2"/>
</dbReference>
<dbReference type="PROSITE" id="PS01016">
    <property type="entry name" value="GLYCOPROTEASE"/>
    <property type="match status" value="1"/>
</dbReference>
<keyword id="KW-0012">Acyltransferase</keyword>
<keyword id="KW-0963">Cytoplasm</keyword>
<keyword id="KW-0408">Iron</keyword>
<keyword id="KW-0479">Metal-binding</keyword>
<keyword id="KW-1185">Reference proteome</keyword>
<keyword id="KW-0808">Transferase</keyword>
<keyword id="KW-0819">tRNA processing</keyword>
<name>TSAD_HALH5</name>
<feature type="chain" id="PRO_0000303267" description="tRNA N6-adenosine threonylcarbamoyltransferase">
    <location>
        <begin position="1"/>
        <end position="343"/>
    </location>
</feature>
<feature type="binding site" evidence="1">
    <location>
        <position position="120"/>
    </location>
    <ligand>
        <name>Fe cation</name>
        <dbReference type="ChEBI" id="CHEBI:24875"/>
    </ligand>
</feature>
<feature type="binding site" evidence="1">
    <location>
        <position position="124"/>
    </location>
    <ligand>
        <name>Fe cation</name>
        <dbReference type="ChEBI" id="CHEBI:24875"/>
    </ligand>
</feature>
<feature type="binding site" evidence="1">
    <location>
        <begin position="142"/>
        <end position="146"/>
    </location>
    <ligand>
        <name>substrate</name>
    </ligand>
</feature>
<feature type="binding site" evidence="1">
    <location>
        <position position="175"/>
    </location>
    <ligand>
        <name>substrate</name>
    </ligand>
</feature>
<feature type="binding site" evidence="1">
    <location>
        <position position="188"/>
    </location>
    <ligand>
        <name>substrate</name>
    </ligand>
</feature>
<feature type="binding site" evidence="1">
    <location>
        <position position="192"/>
    </location>
    <ligand>
        <name>substrate</name>
    </ligand>
</feature>
<feature type="binding site" evidence="1">
    <location>
        <position position="281"/>
    </location>
    <ligand>
        <name>substrate</name>
    </ligand>
</feature>
<feature type="binding site" evidence="1">
    <location>
        <position position="309"/>
    </location>
    <ligand>
        <name>Fe cation</name>
        <dbReference type="ChEBI" id="CHEBI:24875"/>
    </ligand>
</feature>
<reference key="1">
    <citation type="journal article" date="2000" name="Nucleic Acids Res.">
        <title>Complete genome sequence of the alkaliphilic bacterium Bacillus halodurans and genomic sequence comparison with Bacillus subtilis.</title>
        <authorList>
            <person name="Takami H."/>
            <person name="Nakasone K."/>
            <person name="Takaki Y."/>
            <person name="Maeno G."/>
            <person name="Sasaki R."/>
            <person name="Masui N."/>
            <person name="Fuji F."/>
            <person name="Hirama C."/>
            <person name="Nakamura Y."/>
            <person name="Ogasawara N."/>
            <person name="Kuhara S."/>
            <person name="Horikoshi K."/>
        </authorList>
    </citation>
    <scope>NUCLEOTIDE SEQUENCE [LARGE SCALE GENOMIC DNA]</scope>
    <source>
        <strain>ATCC BAA-125 / DSM 18197 / FERM 7344 / JCM 9153 / C-125</strain>
    </source>
</reference>
<protein>
    <recommendedName>
        <fullName evidence="1">tRNA N6-adenosine threonylcarbamoyltransferase</fullName>
        <ecNumber evidence="1">2.3.1.234</ecNumber>
    </recommendedName>
    <alternativeName>
        <fullName evidence="1">N6-L-threonylcarbamoyladenine synthase</fullName>
        <shortName evidence="1">t(6)A synthase</shortName>
    </alternativeName>
    <alternativeName>
        <fullName evidence="1">t(6)A37 threonylcarbamoyladenosine biosynthesis protein TsaD</fullName>
    </alternativeName>
    <alternativeName>
        <fullName evidence="1">tRNA threonylcarbamoyladenosine biosynthesis protein TsaD</fullName>
    </alternativeName>
</protein>
<evidence type="ECO:0000255" key="1">
    <source>
        <dbReference type="HAMAP-Rule" id="MF_01445"/>
    </source>
</evidence>
<gene>
    <name evidence="1" type="primary">tsaD</name>
    <name type="synonym">gcp</name>
    <name type="ordered locus">BH0548</name>
</gene>